<evidence type="ECO:0000255" key="1">
    <source>
        <dbReference type="HAMAP-Rule" id="MF_01379"/>
    </source>
</evidence>
<gene>
    <name evidence="1" type="primary">psbA</name>
</gene>
<feature type="chain" id="PRO_0000316491" description="Photosystem II protein D1" evidence="1">
    <location>
        <begin position="1"/>
        <end position="347"/>
    </location>
</feature>
<feature type="transmembrane region" description="Helical" evidence="1">
    <location>
        <begin position="31"/>
        <end position="48"/>
    </location>
</feature>
<feature type="transmembrane region" description="Helical" evidence="1">
    <location>
        <begin position="120"/>
        <end position="135"/>
    </location>
</feature>
<feature type="transmembrane region" description="Helical" evidence="1">
    <location>
        <begin position="144"/>
        <end position="158"/>
    </location>
</feature>
<feature type="transmembrane region" description="Helical" evidence="1">
    <location>
        <begin position="199"/>
        <end position="220"/>
    </location>
</feature>
<feature type="transmembrane region" description="Helical" evidence="1">
    <location>
        <begin position="276"/>
        <end position="290"/>
    </location>
</feature>
<feature type="binding site" description="axial binding residue" evidence="1">
    <location>
        <position position="120"/>
    </location>
    <ligand>
        <name>chlorophyll a</name>
        <dbReference type="ChEBI" id="CHEBI:58416"/>
        <label>ChlzD1</label>
    </ligand>
    <ligandPart>
        <name>Mg</name>
        <dbReference type="ChEBI" id="CHEBI:25107"/>
    </ligandPart>
</feature>
<feature type="binding site" evidence="1">
    <location>
        <position position="128"/>
    </location>
    <ligand>
        <name>pheophytin a</name>
        <dbReference type="ChEBI" id="CHEBI:136840"/>
        <label>D1</label>
    </ligand>
</feature>
<feature type="binding site" evidence="1">
    <location>
        <position position="172"/>
    </location>
    <ligand>
        <name>[CaMn4O5] cluster</name>
        <dbReference type="ChEBI" id="CHEBI:189552"/>
    </ligand>
</feature>
<feature type="binding site" evidence="1">
    <location>
        <position position="191"/>
    </location>
    <ligand>
        <name>[CaMn4O5] cluster</name>
        <dbReference type="ChEBI" id="CHEBI:189552"/>
    </ligand>
</feature>
<feature type="binding site" description="axial binding residue" evidence="1">
    <location>
        <position position="200"/>
    </location>
    <ligand>
        <name>chlorophyll a</name>
        <dbReference type="ChEBI" id="CHEBI:58416"/>
        <label>PD1</label>
    </ligand>
    <ligandPart>
        <name>Mg</name>
        <dbReference type="ChEBI" id="CHEBI:25107"/>
    </ligandPart>
</feature>
<feature type="binding site" evidence="1">
    <location>
        <position position="217"/>
    </location>
    <ligand>
        <name>a quinone</name>
        <dbReference type="ChEBI" id="CHEBI:132124"/>
        <label>B</label>
    </ligand>
</feature>
<feature type="binding site" evidence="1">
    <location>
        <position position="217"/>
    </location>
    <ligand>
        <name>Fe cation</name>
        <dbReference type="ChEBI" id="CHEBI:24875"/>
        <note>ligand shared with heterodimeric partner</note>
    </ligand>
</feature>
<feature type="binding site" evidence="1">
    <location>
        <begin position="266"/>
        <end position="267"/>
    </location>
    <ligand>
        <name>a quinone</name>
        <dbReference type="ChEBI" id="CHEBI:132124"/>
        <label>B</label>
    </ligand>
</feature>
<feature type="binding site" evidence="1">
    <location>
        <position position="274"/>
    </location>
    <ligand>
        <name>Fe cation</name>
        <dbReference type="ChEBI" id="CHEBI:24875"/>
        <note>ligand shared with heterodimeric partner</note>
    </ligand>
</feature>
<feature type="binding site" evidence="1">
    <location>
        <position position="334"/>
    </location>
    <ligand>
        <name>[CaMn4O5] cluster</name>
        <dbReference type="ChEBI" id="CHEBI:189552"/>
    </ligand>
</feature>
<feature type="binding site" evidence="1">
    <location>
        <position position="335"/>
    </location>
    <ligand>
        <name>[CaMn4O5] cluster</name>
        <dbReference type="ChEBI" id="CHEBI:189552"/>
    </ligand>
</feature>
<feature type="binding site" evidence="1">
    <location>
        <position position="344"/>
    </location>
    <ligand>
        <name>[CaMn4O5] cluster</name>
        <dbReference type="ChEBI" id="CHEBI:189552"/>
    </ligand>
</feature>
<feature type="site" description="Tyrosine radical intermediate" evidence="1">
    <location>
        <position position="163"/>
    </location>
</feature>
<feature type="site" description="Stabilizes free radical intermediate" evidence="1">
    <location>
        <position position="192"/>
    </location>
</feature>
<keyword id="KW-0106">Calcium</keyword>
<keyword id="KW-0148">Chlorophyll</keyword>
<keyword id="KW-0150">Chloroplast</keyword>
<keyword id="KW-0157">Chromophore</keyword>
<keyword id="KW-0249">Electron transport</keyword>
<keyword id="KW-0359">Herbicide resistance</keyword>
<keyword id="KW-0408">Iron</keyword>
<keyword id="KW-0460">Magnesium</keyword>
<keyword id="KW-0464">Manganese</keyword>
<keyword id="KW-0472">Membrane</keyword>
<keyword id="KW-0479">Metal-binding</keyword>
<keyword id="KW-0560">Oxidoreductase</keyword>
<keyword id="KW-0602">Photosynthesis</keyword>
<keyword id="KW-0604">Photosystem II</keyword>
<keyword id="KW-0934">Plastid</keyword>
<keyword id="KW-0793">Thylakoid</keyword>
<keyword id="KW-0812">Transmembrane</keyword>
<keyword id="KW-1133">Transmembrane helix</keyword>
<keyword id="KW-0813">Transport</keyword>
<accession>Q9TM69</accession>
<geneLocation type="chloroplast"/>
<dbReference type="EC" id="1.10.3.9" evidence="1"/>
<dbReference type="EMBL" id="AB025589">
    <property type="protein sequence ID" value="BAA83816.2"/>
    <property type="molecule type" value="Genomic_DNA"/>
</dbReference>
<dbReference type="SMR" id="Q9TM69"/>
<dbReference type="GO" id="GO:0009535">
    <property type="term" value="C:chloroplast thylakoid membrane"/>
    <property type="evidence" value="ECO:0007669"/>
    <property type="project" value="UniProtKB-SubCell"/>
</dbReference>
<dbReference type="GO" id="GO:0009523">
    <property type="term" value="C:photosystem II"/>
    <property type="evidence" value="ECO:0007669"/>
    <property type="project" value="UniProtKB-KW"/>
</dbReference>
<dbReference type="GO" id="GO:0016168">
    <property type="term" value="F:chlorophyll binding"/>
    <property type="evidence" value="ECO:0007669"/>
    <property type="project" value="UniProtKB-UniRule"/>
</dbReference>
<dbReference type="GO" id="GO:0045156">
    <property type="term" value="F:electron transporter, transferring electrons within the cyclic electron transport pathway of photosynthesis activity"/>
    <property type="evidence" value="ECO:0007669"/>
    <property type="project" value="InterPro"/>
</dbReference>
<dbReference type="GO" id="GO:0005506">
    <property type="term" value="F:iron ion binding"/>
    <property type="evidence" value="ECO:0007669"/>
    <property type="project" value="UniProtKB-UniRule"/>
</dbReference>
<dbReference type="GO" id="GO:0016682">
    <property type="term" value="F:oxidoreductase activity, acting on diphenols and related substances as donors, oxygen as acceptor"/>
    <property type="evidence" value="ECO:0007669"/>
    <property type="project" value="UniProtKB-UniRule"/>
</dbReference>
<dbReference type="GO" id="GO:0009772">
    <property type="term" value="P:photosynthetic electron transport in photosystem II"/>
    <property type="evidence" value="ECO:0007669"/>
    <property type="project" value="InterPro"/>
</dbReference>
<dbReference type="GO" id="GO:0009635">
    <property type="term" value="P:response to herbicide"/>
    <property type="evidence" value="ECO:0007669"/>
    <property type="project" value="UniProtKB-KW"/>
</dbReference>
<dbReference type="Gene3D" id="1.20.85.10">
    <property type="entry name" value="Photosystem II protein D1-like"/>
    <property type="match status" value="1"/>
</dbReference>
<dbReference type="HAMAP" id="MF_01379">
    <property type="entry name" value="PSII_PsbA_D1"/>
    <property type="match status" value="1"/>
</dbReference>
<dbReference type="InterPro" id="IPR055266">
    <property type="entry name" value="D1/D2"/>
</dbReference>
<dbReference type="InterPro" id="IPR036854">
    <property type="entry name" value="Photo_II_D1/D2_sf"/>
</dbReference>
<dbReference type="InterPro" id="IPR000484">
    <property type="entry name" value="Photo_RC_L/M"/>
</dbReference>
<dbReference type="InterPro" id="IPR055265">
    <property type="entry name" value="Photo_RC_L/M_CS"/>
</dbReference>
<dbReference type="InterPro" id="IPR005867">
    <property type="entry name" value="PSII_D1"/>
</dbReference>
<dbReference type="NCBIfam" id="TIGR01151">
    <property type="entry name" value="psbA"/>
    <property type="match status" value="1"/>
</dbReference>
<dbReference type="PANTHER" id="PTHR33149:SF12">
    <property type="entry name" value="PHOTOSYSTEM II D2 PROTEIN"/>
    <property type="match status" value="1"/>
</dbReference>
<dbReference type="PANTHER" id="PTHR33149">
    <property type="entry name" value="PHOTOSYSTEM II PROTEIN D1"/>
    <property type="match status" value="1"/>
</dbReference>
<dbReference type="Pfam" id="PF00124">
    <property type="entry name" value="Photo_RC"/>
    <property type="match status" value="1"/>
</dbReference>
<dbReference type="PRINTS" id="PR00256">
    <property type="entry name" value="REACTNCENTRE"/>
</dbReference>
<dbReference type="SUPFAM" id="SSF81483">
    <property type="entry name" value="Bacterial photosystem II reaction centre, L and M subunits"/>
    <property type="match status" value="1"/>
</dbReference>
<dbReference type="PROSITE" id="PS00244">
    <property type="entry name" value="REACTION_CENTER"/>
    <property type="match status" value="1"/>
</dbReference>
<comment type="function">
    <text evidence="1">Photosystem II (PSII) is a light-driven water:plastoquinone oxidoreductase that uses light energy to abstract electrons from H(2)O, generating O(2) and a proton gradient subsequently used for ATP formation. It consists of a core antenna complex that captures photons, and an electron transfer chain that converts photonic excitation into a charge separation. The D1/D2 (PsbA/PsbD) reaction center heterodimer binds P680, the primary electron donor of PSII as well as several subsequent electron acceptors.</text>
</comment>
<comment type="catalytic activity">
    <reaction evidence="1">
        <text>2 a plastoquinone + 4 hnu + 2 H2O = 2 a plastoquinol + O2</text>
        <dbReference type="Rhea" id="RHEA:36359"/>
        <dbReference type="Rhea" id="RHEA-COMP:9561"/>
        <dbReference type="Rhea" id="RHEA-COMP:9562"/>
        <dbReference type="ChEBI" id="CHEBI:15377"/>
        <dbReference type="ChEBI" id="CHEBI:15379"/>
        <dbReference type="ChEBI" id="CHEBI:17757"/>
        <dbReference type="ChEBI" id="CHEBI:30212"/>
        <dbReference type="ChEBI" id="CHEBI:62192"/>
        <dbReference type="EC" id="1.10.3.9"/>
    </reaction>
</comment>
<comment type="cofactor">
    <text evidence="1">The D1/D2 heterodimer binds P680, chlorophylls that are the primary electron donor of PSII, and subsequent electron acceptors. It shares a non-heme iron and each subunit binds pheophytin, quinone, additional chlorophylls, carotenoids and lipids. D1 provides most of the ligands for the Mn4-Ca-O5 cluster of the oxygen-evolving complex (OEC). There is also a Cl(-1) ion associated with D1 and D2, which is required for oxygen evolution. The PSII complex binds additional chlorophylls, carotenoids and specific lipids.</text>
</comment>
<comment type="subunit">
    <text evidence="1">PSII is composed of 1 copy each of membrane proteins PsbA, PsbB, PsbC, PsbD, PsbE, PsbF, PsbH, PsbI, PsbJ, PsbK, PsbL, PsbM, PsbT, PsbX, PsbY, PsbZ, Psb30/Ycf12, at least 3 peripheral proteins of the oxygen-evolving complex and a large number of cofactors. It forms dimeric complexes.</text>
</comment>
<comment type="subcellular location">
    <subcellularLocation>
        <location evidence="1">Plastid</location>
        <location evidence="1">Chloroplast thylakoid membrane</location>
        <topology evidence="1">Multi-pass membrane protein</topology>
    </subcellularLocation>
</comment>
<comment type="PTM">
    <text evidence="1">Tyr-163 forms a radical intermediate that is referred to as redox-active TyrZ, YZ or Y-Z.</text>
</comment>
<comment type="miscellaneous">
    <text evidence="1">2 of the reaction center chlorophylls (ChlD1 and ChlD2) are entirely coordinated by water.</text>
</comment>
<comment type="miscellaneous">
    <text evidence="1">Herbicides such as atrazine, BNT, diuron or ioxynil bind in the Q(B) binding site and block subsequent electron transfer.</text>
</comment>
<comment type="similarity">
    <text evidence="1">Belongs to the reaction center PufL/M/PsbA/D family.</text>
</comment>
<name>PSBA_ALETA</name>
<sequence>MKNTYRASNISGFNWWGTVIGFILSTSNRFYIGWFGIFMFPLTGLAIIAYVAAFILAPPVDIDGIREPVAGSLLYGNNIISGAVIPSSNAIGVHFYPEWESATLLEWLYNGGTYQFVVLHFIGGVSSWMGREWEFSFRLGMRPWIYLAFSAPLVAATAVFVFYPIGQGSFSDGMPLGVSGTFNFMLVFQAEHNILMHPFHILGVAGVFGGSLFSAMHGSLVTSSLLAETSGDVSLNVGYNFGQEDETYSISAAHGYFGRLIFQYASFNNSRSLHFFLAAWPVIGIWFTALGVSTMAFNLNGLNFNQSIIDSNGHLINSWADLVNRANLGIEVMHERNTHHYPLDLGL</sequence>
<proteinExistence type="inferred from homology"/>
<reference key="1">
    <citation type="journal article" date="1999" name="Phycol. Res.">
        <title>Molecular cloning and nucleotide sequence analysis of psbA from the dinoflagellates: origin of the dinoflagellate plastid.</title>
        <authorList>
            <person name="Takishita K."/>
            <person name="Uchida A."/>
        </authorList>
    </citation>
    <scope>NUCLEOTIDE SEQUENCE [GENOMIC DNA]</scope>
    <source>
        <strain>OF151</strain>
    </source>
</reference>
<organism>
    <name type="scientific">Alexandrium tamarense</name>
    <name type="common">Red tide dinoflagellate</name>
    <name type="synonym">Gonyaulax tamarensis</name>
    <dbReference type="NCBI Taxonomy" id="2926"/>
    <lineage>
        <taxon>Eukaryota</taxon>
        <taxon>Sar</taxon>
        <taxon>Alveolata</taxon>
        <taxon>Dinophyceae</taxon>
        <taxon>Gonyaulacales</taxon>
        <taxon>Pyrocystaceae</taxon>
        <taxon>Alexandrium</taxon>
    </lineage>
</organism>
<protein>
    <recommendedName>
        <fullName evidence="1">Photosystem II protein D1</fullName>
        <shortName evidence="1">PSII D1 protein</shortName>
        <ecNumber evidence="1">1.10.3.9</ecNumber>
    </recommendedName>
    <alternativeName>
        <fullName evidence="1">Photosystem II Q(B) protein</fullName>
    </alternativeName>
</protein>